<accession>P66474</accession>
<accession>Q97PR3</accession>
<comment type="function">
    <text evidence="1">Binds as a heterodimer with protein bS6 to the central domain of the 16S rRNA, where it helps stabilize the platform of the 30S subunit.</text>
</comment>
<comment type="subunit">
    <text evidence="1">Part of the 30S ribosomal subunit. Forms a tight heterodimer with protein bS6.</text>
</comment>
<comment type="similarity">
    <text evidence="1">Belongs to the bacterial ribosomal protein bS18 family.</text>
</comment>
<evidence type="ECO:0000255" key="1">
    <source>
        <dbReference type="HAMAP-Rule" id="MF_00270"/>
    </source>
</evidence>
<evidence type="ECO:0000305" key="2"/>
<dbReference type="EMBL" id="AE014133">
    <property type="protein sequence ID" value="AAN59479.1"/>
    <property type="molecule type" value="Genomic_DNA"/>
</dbReference>
<dbReference type="RefSeq" id="NP_722173.1">
    <property type="nucleotide sequence ID" value="NC_004350.2"/>
</dbReference>
<dbReference type="RefSeq" id="WP_000068664.1">
    <property type="nucleotide sequence ID" value="NC_004350.2"/>
</dbReference>
<dbReference type="SMR" id="P66474"/>
<dbReference type="STRING" id="210007.SMU_1858"/>
<dbReference type="GeneID" id="93963800"/>
<dbReference type="KEGG" id="smu:SMU_1858"/>
<dbReference type="PATRIC" id="fig|210007.7.peg.1659"/>
<dbReference type="eggNOG" id="COG0238">
    <property type="taxonomic scope" value="Bacteria"/>
</dbReference>
<dbReference type="HOGENOM" id="CLU_148710_2_2_9"/>
<dbReference type="OrthoDB" id="9812008at2"/>
<dbReference type="PhylomeDB" id="P66474"/>
<dbReference type="PRO" id="PR:P66474"/>
<dbReference type="Proteomes" id="UP000002512">
    <property type="component" value="Chromosome"/>
</dbReference>
<dbReference type="GO" id="GO:0022627">
    <property type="term" value="C:cytosolic small ribosomal subunit"/>
    <property type="evidence" value="ECO:0007669"/>
    <property type="project" value="TreeGrafter"/>
</dbReference>
<dbReference type="GO" id="GO:0070181">
    <property type="term" value="F:small ribosomal subunit rRNA binding"/>
    <property type="evidence" value="ECO:0007669"/>
    <property type="project" value="TreeGrafter"/>
</dbReference>
<dbReference type="GO" id="GO:0003735">
    <property type="term" value="F:structural constituent of ribosome"/>
    <property type="evidence" value="ECO:0007669"/>
    <property type="project" value="InterPro"/>
</dbReference>
<dbReference type="GO" id="GO:0006412">
    <property type="term" value="P:translation"/>
    <property type="evidence" value="ECO:0007669"/>
    <property type="project" value="UniProtKB-UniRule"/>
</dbReference>
<dbReference type="FunFam" id="4.10.640.10:FF:000003">
    <property type="entry name" value="30S ribosomal protein S18"/>
    <property type="match status" value="1"/>
</dbReference>
<dbReference type="Gene3D" id="4.10.640.10">
    <property type="entry name" value="Ribosomal protein S18"/>
    <property type="match status" value="1"/>
</dbReference>
<dbReference type="HAMAP" id="MF_00270">
    <property type="entry name" value="Ribosomal_bS18"/>
    <property type="match status" value="1"/>
</dbReference>
<dbReference type="InterPro" id="IPR001648">
    <property type="entry name" value="Ribosomal_bS18"/>
</dbReference>
<dbReference type="InterPro" id="IPR018275">
    <property type="entry name" value="Ribosomal_bS18_CS"/>
</dbReference>
<dbReference type="InterPro" id="IPR036870">
    <property type="entry name" value="Ribosomal_bS18_sf"/>
</dbReference>
<dbReference type="NCBIfam" id="TIGR00165">
    <property type="entry name" value="S18"/>
    <property type="match status" value="1"/>
</dbReference>
<dbReference type="PANTHER" id="PTHR13479">
    <property type="entry name" value="30S RIBOSOMAL PROTEIN S18"/>
    <property type="match status" value="1"/>
</dbReference>
<dbReference type="PANTHER" id="PTHR13479:SF40">
    <property type="entry name" value="SMALL RIBOSOMAL SUBUNIT PROTEIN BS18M"/>
    <property type="match status" value="1"/>
</dbReference>
<dbReference type="Pfam" id="PF01084">
    <property type="entry name" value="Ribosomal_S18"/>
    <property type="match status" value="1"/>
</dbReference>
<dbReference type="PRINTS" id="PR00974">
    <property type="entry name" value="RIBOSOMALS18"/>
</dbReference>
<dbReference type="SUPFAM" id="SSF46911">
    <property type="entry name" value="Ribosomal protein S18"/>
    <property type="match status" value="1"/>
</dbReference>
<dbReference type="PROSITE" id="PS00057">
    <property type="entry name" value="RIBOSOMAL_S18"/>
    <property type="match status" value="1"/>
</dbReference>
<feature type="chain" id="PRO_0000111240" description="Small ribosomal subunit protein bS18">
    <location>
        <begin position="1"/>
        <end position="79"/>
    </location>
</feature>
<sequence>MAQQRRGGFKRRKKVDYIAANKIEYVDYKDTELLSRFVSERGKILPRRVTGTSAKNQRKVTTAIKRARVMALMPFVNED</sequence>
<protein>
    <recommendedName>
        <fullName evidence="1">Small ribosomal subunit protein bS18</fullName>
    </recommendedName>
    <alternativeName>
        <fullName evidence="2">30S ribosomal protein S18</fullName>
    </alternativeName>
</protein>
<keyword id="KW-1185">Reference proteome</keyword>
<keyword id="KW-0687">Ribonucleoprotein</keyword>
<keyword id="KW-0689">Ribosomal protein</keyword>
<keyword id="KW-0694">RNA-binding</keyword>
<keyword id="KW-0699">rRNA-binding</keyword>
<name>RS18_STRMU</name>
<gene>
    <name evidence="1" type="primary">rpsR</name>
    <name type="synonym">rs18</name>
    <name type="ordered locus">SMU_1858</name>
</gene>
<reference key="1">
    <citation type="journal article" date="2002" name="Proc. Natl. Acad. Sci. U.S.A.">
        <title>Genome sequence of Streptococcus mutans UA159, a cariogenic dental pathogen.</title>
        <authorList>
            <person name="Ajdic D.J."/>
            <person name="McShan W.M."/>
            <person name="McLaughlin R.E."/>
            <person name="Savic G."/>
            <person name="Chang J."/>
            <person name="Carson M.B."/>
            <person name="Primeaux C."/>
            <person name="Tian R."/>
            <person name="Kenton S."/>
            <person name="Jia H.G."/>
            <person name="Lin S.P."/>
            <person name="Qian Y."/>
            <person name="Li S."/>
            <person name="Zhu H."/>
            <person name="Najar F.Z."/>
            <person name="Lai H."/>
            <person name="White J."/>
            <person name="Roe B.A."/>
            <person name="Ferretti J.J."/>
        </authorList>
    </citation>
    <scope>NUCLEOTIDE SEQUENCE [LARGE SCALE GENOMIC DNA]</scope>
    <source>
        <strain>ATCC 700610 / UA159</strain>
    </source>
</reference>
<proteinExistence type="inferred from homology"/>
<organism>
    <name type="scientific">Streptococcus mutans serotype c (strain ATCC 700610 / UA159)</name>
    <dbReference type="NCBI Taxonomy" id="210007"/>
    <lineage>
        <taxon>Bacteria</taxon>
        <taxon>Bacillati</taxon>
        <taxon>Bacillota</taxon>
        <taxon>Bacilli</taxon>
        <taxon>Lactobacillales</taxon>
        <taxon>Streptococcaceae</taxon>
        <taxon>Streptococcus</taxon>
    </lineage>
</organism>